<keyword id="KW-0020">Allergen</keyword>
<keyword id="KW-0134">Cell wall</keyword>
<keyword id="KW-0961">Cell wall biogenesis/degradation</keyword>
<keyword id="KW-0903">Direct protein sequencing</keyword>
<keyword id="KW-1015">Disulfide bond</keyword>
<keyword id="KW-0325">Glycoprotein</keyword>
<keyword id="KW-0472">Membrane</keyword>
<keyword id="KW-1185">Reference proteome</keyword>
<keyword id="KW-0964">Secreted</keyword>
<keyword id="KW-0732">Signal</keyword>
<feature type="signal peptide" evidence="5">
    <location>
        <begin position="1"/>
        <end position="24"/>
    </location>
</feature>
<feature type="chain" id="PRO_0000154575" description="Expansin-B9">
    <location>
        <begin position="25"/>
        <end position="269"/>
    </location>
</feature>
<feature type="domain" description="Expansin-like EG45" evidence="4">
    <location>
        <begin position="63"/>
        <end position="169"/>
    </location>
</feature>
<feature type="domain" description="Expansin-like CBD" evidence="3">
    <location>
        <begin position="183"/>
        <end position="264"/>
    </location>
</feature>
<feature type="glycosylation site" description="N-linked (GlcNAc...) asparagine" evidence="2">
    <location>
        <position position="34"/>
    </location>
</feature>
<feature type="disulfide bond" evidence="4">
    <location>
        <begin position="66"/>
        <end position="94"/>
    </location>
</feature>
<feature type="disulfide bond" evidence="4">
    <location>
        <begin position="97"/>
        <end position="164"/>
    </location>
</feature>
<feature type="disulfide bond" evidence="4">
    <location>
        <begin position="102"/>
        <end position="108"/>
    </location>
</feature>
<gene>
    <name type="primary">EXPB9</name>
    <name type="synonym">EXPB1B</name>
</gene>
<name>EXPB9_MAIZE</name>
<protein>
    <recommendedName>
        <fullName>Expansin-B9</fullName>
    </recommendedName>
    <alternativeName>
        <fullName>Beta-expansin-1b</fullName>
    </alternativeName>
    <alternativeName>
        <fullName>Pollen allergen Zea m 1</fullName>
    </alternativeName>
    <alternativeName>
        <fullName>ZmEXPB9</fullName>
    </alternativeName>
    <allergenName>Zea m 1</allergenName>
</protein>
<accession>Q07154</accession>
<accession>Q84UA8</accession>
<evidence type="ECO:0000250" key="1"/>
<evidence type="ECO:0000255" key="2"/>
<evidence type="ECO:0000255" key="3">
    <source>
        <dbReference type="PROSITE-ProRule" id="PRU00078"/>
    </source>
</evidence>
<evidence type="ECO:0000255" key="4">
    <source>
        <dbReference type="PROSITE-ProRule" id="PRU00079"/>
    </source>
</evidence>
<evidence type="ECO:0000269" key="5">
    <source>
    </source>
</evidence>
<evidence type="ECO:0000269" key="6">
    <source>
    </source>
</evidence>
<evidence type="ECO:0000305" key="7"/>
<comment type="function">
    <text evidence="5 6">May aid fertilization by loosening the cell wall of the stigma and style, thereby facilitating penetration of the pollen tube. Acts selectively on grass cell walls, which are relatively poor in pectins and xyloglucans and rich in glucuronoarabinoxylans and (1-3),(1-4)-beta-D-glucans, when compared with cell walls of other angiosperms, including other monocots.</text>
</comment>
<comment type="subcellular location">
    <subcellularLocation>
        <location evidence="1">Secreted</location>
        <location evidence="1">Cell wall</location>
    </subcellularLocation>
    <subcellularLocation>
        <location evidence="1">Membrane</location>
        <topology evidence="1">Peripheral membrane protein</topology>
    </subcellularLocation>
</comment>
<comment type="tissue specificity">
    <text evidence="5">Expressed in anthers and pollen.</text>
</comment>
<comment type="developmental stage">
    <text>Expression low before and high after pollen mitosis.</text>
</comment>
<comment type="allergen">
    <text>Causes an allergic reaction in human. Causes maize pollen allergy.</text>
</comment>
<comment type="similarity">
    <text evidence="7">Belongs to the expansin family. Expansin B subfamily.</text>
</comment>
<comment type="online information" name="EXPANSIN homepage">
    <link uri="https://www.dept.psu.edu/biology/groups/expansins/index.htm"/>
</comment>
<proteinExistence type="evidence at protein level"/>
<dbReference type="EMBL" id="L14271">
    <property type="protein sequence ID" value="AAA33496.1"/>
    <property type="molecule type" value="mRNA"/>
</dbReference>
<dbReference type="EMBL" id="AY197352">
    <property type="protein sequence ID" value="AAO45607.1"/>
    <property type="molecule type" value="mRNA"/>
</dbReference>
<dbReference type="PIR" id="JC1524">
    <property type="entry name" value="JC1524"/>
</dbReference>
<dbReference type="RefSeq" id="NP_001105209.1">
    <property type="nucleotide sequence ID" value="NM_001111739.1"/>
</dbReference>
<dbReference type="SMR" id="Q07154"/>
<dbReference type="FunCoup" id="Q07154">
    <property type="interactions" value="29"/>
</dbReference>
<dbReference type="STRING" id="4577.Q07154"/>
<dbReference type="Allergome" id="3529">
    <property type="allergen name" value="Zea m 1.0101"/>
</dbReference>
<dbReference type="Allergome" id="680">
    <property type="allergen name" value="Zea m 1"/>
</dbReference>
<dbReference type="GlyCosmos" id="Q07154">
    <property type="glycosylation" value="1 site, No reported glycans"/>
</dbReference>
<dbReference type="PaxDb" id="4577-GRMZM2G072886_P02"/>
<dbReference type="MaizeGDB" id="65840"/>
<dbReference type="eggNOG" id="ENOG502QRTE">
    <property type="taxonomic scope" value="Eukaryota"/>
</dbReference>
<dbReference type="InParanoid" id="Q07154"/>
<dbReference type="Proteomes" id="UP000007305">
    <property type="component" value="Unplaced"/>
</dbReference>
<dbReference type="ExpressionAtlas" id="Q07154">
    <property type="expression patterns" value="baseline and differential"/>
</dbReference>
<dbReference type="GO" id="GO:0005576">
    <property type="term" value="C:extracellular region"/>
    <property type="evidence" value="ECO:0007669"/>
    <property type="project" value="UniProtKB-KW"/>
</dbReference>
<dbReference type="GO" id="GO:0016020">
    <property type="term" value="C:membrane"/>
    <property type="evidence" value="ECO:0007669"/>
    <property type="project" value="UniProtKB-SubCell"/>
</dbReference>
<dbReference type="GO" id="GO:0009828">
    <property type="term" value="P:plant-type cell wall loosening"/>
    <property type="evidence" value="ECO:0000314"/>
    <property type="project" value="UniProtKB"/>
</dbReference>
<dbReference type="GO" id="GO:0071669">
    <property type="term" value="P:plant-type cell wall organization or biogenesis"/>
    <property type="evidence" value="ECO:0000314"/>
    <property type="project" value="UniProtKB"/>
</dbReference>
<dbReference type="GO" id="GO:0019953">
    <property type="term" value="P:sexual reproduction"/>
    <property type="evidence" value="ECO:0007669"/>
    <property type="project" value="InterPro"/>
</dbReference>
<dbReference type="CDD" id="cd22275">
    <property type="entry name" value="DPBB_EXPB_N"/>
    <property type="match status" value="1"/>
</dbReference>
<dbReference type="Gene3D" id="2.60.40.760">
    <property type="entry name" value="Expansin, cellulose-binding-like domain"/>
    <property type="match status" value="1"/>
</dbReference>
<dbReference type="Gene3D" id="2.40.40.10">
    <property type="entry name" value="RlpA-like domain"/>
    <property type="match status" value="1"/>
</dbReference>
<dbReference type="InterPro" id="IPR007118">
    <property type="entry name" value="Expan_Lol_pI"/>
</dbReference>
<dbReference type="InterPro" id="IPR007112">
    <property type="entry name" value="Expansin/allergen_DPBB_dom"/>
</dbReference>
<dbReference type="InterPro" id="IPR007117">
    <property type="entry name" value="Expansin_CBD"/>
</dbReference>
<dbReference type="InterPro" id="IPR036749">
    <property type="entry name" value="Expansin_CBD_sf"/>
</dbReference>
<dbReference type="InterPro" id="IPR005795">
    <property type="entry name" value="LolPI"/>
</dbReference>
<dbReference type="InterPro" id="IPR009009">
    <property type="entry name" value="RlpA-like_DPBB"/>
</dbReference>
<dbReference type="InterPro" id="IPR036908">
    <property type="entry name" value="RlpA-like_sf"/>
</dbReference>
<dbReference type="PANTHER" id="PTHR31692">
    <property type="entry name" value="EXPANSIN-B3"/>
    <property type="match status" value="1"/>
</dbReference>
<dbReference type="PANTHER" id="PTHR31692:SF7">
    <property type="entry name" value="EXPANSIN-B9"/>
    <property type="match status" value="1"/>
</dbReference>
<dbReference type="Pfam" id="PF03330">
    <property type="entry name" value="DPBB_1"/>
    <property type="match status" value="1"/>
</dbReference>
<dbReference type="Pfam" id="PF01357">
    <property type="entry name" value="Expansin_C"/>
    <property type="match status" value="1"/>
</dbReference>
<dbReference type="PRINTS" id="PR01225">
    <property type="entry name" value="EXPANSNFAMLY"/>
</dbReference>
<dbReference type="PRINTS" id="PR00829">
    <property type="entry name" value="LOLP1ALLERGN"/>
</dbReference>
<dbReference type="SMART" id="SM00837">
    <property type="entry name" value="DPBB_1"/>
    <property type="match status" value="1"/>
</dbReference>
<dbReference type="SUPFAM" id="SSF50685">
    <property type="entry name" value="Barwin-like endoglucanases"/>
    <property type="match status" value="1"/>
</dbReference>
<dbReference type="SUPFAM" id="SSF49590">
    <property type="entry name" value="PHL pollen allergen"/>
    <property type="match status" value="1"/>
</dbReference>
<dbReference type="PROSITE" id="PS50843">
    <property type="entry name" value="EXPANSIN_CBD"/>
    <property type="match status" value="1"/>
</dbReference>
<dbReference type="PROSITE" id="PS50842">
    <property type="entry name" value="EXPANSIN_EG45"/>
    <property type="match status" value="1"/>
</dbReference>
<reference key="1">
    <citation type="journal article" date="2001" name="Plant Physiol.">
        <title>Analysis and expression of the alpha-expansin and beta-expansin gene families in maize.</title>
        <authorList>
            <person name="Wu Y."/>
            <person name="Meeley R.B."/>
            <person name="Cosgrove D.J."/>
        </authorList>
    </citation>
    <scope>NUCLEOTIDE SEQUENCE [MRNA]</scope>
</reference>
<reference key="2">
    <citation type="journal article" date="2003" name="Plant Physiol.">
        <title>Purification and characterization of four beta-expansins (Zea m 1 isoforms) from maize pollen.</title>
        <authorList>
            <person name="Li L.-C."/>
            <person name="Bedinger P.A."/>
            <person name="Volk C."/>
            <person name="Jones A.D."/>
            <person name="Cosgrove D.J."/>
        </authorList>
    </citation>
    <scope>NUCLEOTIDE SEQUENCE [MRNA]</scope>
    <scope>PROTEIN SEQUENCE OF 25-44</scope>
    <scope>FUNCTION</scope>
    <scope>TISSUE SPECIFICITY</scope>
</reference>
<reference key="3">
    <citation type="journal article" date="1993" name="Gene">
        <title>Zea mI, the maize homolog of the allergen-encoding Lol pI gene of rye grass.</title>
        <authorList>
            <person name="Broadwater A.H."/>
            <person name="Rubinstein A.L."/>
            <person name="Chay C.H."/>
            <person name="Klapper D.G."/>
            <person name="Bedinger P.A."/>
        </authorList>
    </citation>
    <scope>NUCLEOTIDE SEQUENCE [MRNA] OF 79-269</scope>
    <source>
        <tissue>Pollen</tissue>
    </source>
</reference>
<reference key="4">
    <citation type="journal article" date="1997" name="Proc. Natl. Acad. Sci. U.S.A.">
        <title>Group I allergens of grass pollen as cell wall-loosening agents.</title>
        <authorList>
            <person name="Cosgrove D.J."/>
            <person name="Bedinger P.A."/>
            <person name="Durachko D.M."/>
        </authorList>
    </citation>
    <scope>FUNCTION</scope>
</reference>
<reference key="5">
    <citation type="journal article" date="2004" name="Plant Mol. Biol.">
        <title>Nomenclature for members of the expansin superfamily of genes and proteins.</title>
        <authorList>
            <person name="Kende H."/>
            <person name="Bradford K.J."/>
            <person name="Brummell D.A."/>
            <person name="Cho H.-T."/>
            <person name="Cosgrove D.J."/>
            <person name="Fleming A.J."/>
            <person name="Gehring C."/>
            <person name="Lee Y."/>
            <person name="McQueen-Mason S.J."/>
            <person name="Rose J.K.C."/>
            <person name="Voesenek L.A.C."/>
        </authorList>
    </citation>
    <scope>NOMENCLATURE</scope>
</reference>
<sequence>MGSLANNIMVVGAVLAALVVGGSCGPPKVPPGPNITTNYNGKWLTARATWYGQPNGAGAPDNGGACGIKNVNLPPYSGMTACGNVPIFKDGKGCGSCYEVRCKEKPECSGNPVTVFITDMNYEPIAPYHFDLSGKAFGSLAKPGLNDKLRHCGIMDVEFRRVRCKYPAGQKIVFHIEKGCNPNYVAVLVKFVADDGDIVLMEIQDKLSAEWKPMKLSWGAIWRMDTAKALKGPFSIRLTSESGKKVIAKDIIPANWRPDAVYTSNVQFY</sequence>
<organism>
    <name type="scientific">Zea mays</name>
    <name type="common">Maize</name>
    <dbReference type="NCBI Taxonomy" id="4577"/>
    <lineage>
        <taxon>Eukaryota</taxon>
        <taxon>Viridiplantae</taxon>
        <taxon>Streptophyta</taxon>
        <taxon>Embryophyta</taxon>
        <taxon>Tracheophyta</taxon>
        <taxon>Spermatophyta</taxon>
        <taxon>Magnoliopsida</taxon>
        <taxon>Liliopsida</taxon>
        <taxon>Poales</taxon>
        <taxon>Poaceae</taxon>
        <taxon>PACMAD clade</taxon>
        <taxon>Panicoideae</taxon>
        <taxon>Andropogonodae</taxon>
        <taxon>Andropogoneae</taxon>
        <taxon>Tripsacinae</taxon>
        <taxon>Zea</taxon>
    </lineage>
</organism>